<feature type="chain" id="PRO_0000344135" description="Urease accessory protein UreF">
    <location>
        <begin position="1"/>
        <end position="224"/>
    </location>
</feature>
<evidence type="ECO:0000255" key="1">
    <source>
        <dbReference type="HAMAP-Rule" id="MF_01385"/>
    </source>
</evidence>
<dbReference type="EMBL" id="CP001029">
    <property type="protein sequence ID" value="ACB81355.1"/>
    <property type="molecule type" value="Genomic_DNA"/>
</dbReference>
<dbReference type="SMR" id="B1ZHN7"/>
<dbReference type="STRING" id="441620.Mpop_3203"/>
<dbReference type="KEGG" id="mpo:Mpop_3203"/>
<dbReference type="eggNOG" id="COG0830">
    <property type="taxonomic scope" value="Bacteria"/>
</dbReference>
<dbReference type="HOGENOM" id="CLU_049215_2_0_5"/>
<dbReference type="OrthoDB" id="9798772at2"/>
<dbReference type="Proteomes" id="UP000007136">
    <property type="component" value="Chromosome"/>
</dbReference>
<dbReference type="GO" id="GO:0005737">
    <property type="term" value="C:cytoplasm"/>
    <property type="evidence" value="ECO:0007669"/>
    <property type="project" value="UniProtKB-SubCell"/>
</dbReference>
<dbReference type="GO" id="GO:0016151">
    <property type="term" value="F:nickel cation binding"/>
    <property type="evidence" value="ECO:0007669"/>
    <property type="project" value="UniProtKB-UniRule"/>
</dbReference>
<dbReference type="Gene3D" id="1.10.4190.10">
    <property type="entry name" value="Urease accessory protein UreF"/>
    <property type="match status" value="1"/>
</dbReference>
<dbReference type="HAMAP" id="MF_01385">
    <property type="entry name" value="UreF"/>
    <property type="match status" value="1"/>
</dbReference>
<dbReference type="InterPro" id="IPR002639">
    <property type="entry name" value="UreF"/>
</dbReference>
<dbReference type="InterPro" id="IPR038277">
    <property type="entry name" value="UreF_sf"/>
</dbReference>
<dbReference type="PANTHER" id="PTHR33620">
    <property type="entry name" value="UREASE ACCESSORY PROTEIN F"/>
    <property type="match status" value="1"/>
</dbReference>
<dbReference type="PANTHER" id="PTHR33620:SF1">
    <property type="entry name" value="UREASE ACCESSORY PROTEIN F"/>
    <property type="match status" value="1"/>
</dbReference>
<dbReference type="Pfam" id="PF01730">
    <property type="entry name" value="UreF"/>
    <property type="match status" value="1"/>
</dbReference>
<dbReference type="PIRSF" id="PIRSF009467">
    <property type="entry name" value="Ureas_acces_UreF"/>
    <property type="match status" value="1"/>
</dbReference>
<keyword id="KW-0143">Chaperone</keyword>
<keyword id="KW-0963">Cytoplasm</keyword>
<keyword id="KW-0996">Nickel insertion</keyword>
<sequence>MIDALRLMAWLSPTYPVGAFAYSHGLEWAVECGDVRDAATLADWLSDVLERGAGRNDMILCACAHRAVAARDDADLVAINDLALALAPSRELHLETSQQGRSFLDATLQAWPCPALAEVAARLEGRLAYPIAVGAAAGAHGVAREATVAAYGLAFVQNLVSAALRVAPVGQSAGTAVLASLTPRVAALAETLHAADRDALGSATLRLDLGSFRHETQYSRIFRS</sequence>
<proteinExistence type="inferred from homology"/>
<comment type="function">
    <text evidence="1">Required for maturation of urease via the functional incorporation of the urease nickel metallocenter.</text>
</comment>
<comment type="subunit">
    <text evidence="1">UreD, UreF and UreG form a complex that acts as a GTP-hydrolysis-dependent molecular chaperone, activating the urease apoprotein by helping to assemble the nickel containing metallocenter of UreC. The UreE protein probably delivers the nickel.</text>
</comment>
<comment type="subcellular location">
    <subcellularLocation>
        <location evidence="1">Cytoplasm</location>
    </subcellularLocation>
</comment>
<comment type="similarity">
    <text evidence="1">Belongs to the UreF family.</text>
</comment>
<gene>
    <name evidence="1" type="primary">ureF</name>
    <name type="ordered locus">Mpop_3203</name>
</gene>
<name>UREF_METPB</name>
<reference key="1">
    <citation type="submission" date="2008-04" db="EMBL/GenBank/DDBJ databases">
        <title>Complete sequence of chromosome of Methylobacterium populi BJ001.</title>
        <authorList>
            <consortium name="US DOE Joint Genome Institute"/>
            <person name="Copeland A."/>
            <person name="Lucas S."/>
            <person name="Lapidus A."/>
            <person name="Glavina del Rio T."/>
            <person name="Dalin E."/>
            <person name="Tice H."/>
            <person name="Bruce D."/>
            <person name="Goodwin L."/>
            <person name="Pitluck S."/>
            <person name="Chertkov O."/>
            <person name="Brettin T."/>
            <person name="Detter J.C."/>
            <person name="Han C."/>
            <person name="Kuske C.R."/>
            <person name="Schmutz J."/>
            <person name="Larimer F."/>
            <person name="Land M."/>
            <person name="Hauser L."/>
            <person name="Kyrpides N."/>
            <person name="Mikhailova N."/>
            <person name="Marx C."/>
            <person name="Richardson P."/>
        </authorList>
    </citation>
    <scope>NUCLEOTIDE SEQUENCE [LARGE SCALE GENOMIC DNA]</scope>
    <source>
        <strain>ATCC BAA-705 / NCIMB 13946 / BJ001</strain>
    </source>
</reference>
<organism>
    <name type="scientific">Methylorubrum populi (strain ATCC BAA-705 / NCIMB 13946 / BJ001)</name>
    <name type="common">Methylobacterium populi</name>
    <dbReference type="NCBI Taxonomy" id="441620"/>
    <lineage>
        <taxon>Bacteria</taxon>
        <taxon>Pseudomonadati</taxon>
        <taxon>Pseudomonadota</taxon>
        <taxon>Alphaproteobacteria</taxon>
        <taxon>Hyphomicrobiales</taxon>
        <taxon>Methylobacteriaceae</taxon>
        <taxon>Methylorubrum</taxon>
    </lineage>
</organism>
<accession>B1ZHN7</accession>
<protein>
    <recommendedName>
        <fullName evidence="1">Urease accessory protein UreF</fullName>
    </recommendedName>
</protein>